<feature type="chain" id="PRO_0000221882" description="Penton protein">
    <location>
        <begin position="1"/>
        <end position="484"/>
    </location>
</feature>
<feature type="region of interest" description="Disordered" evidence="2">
    <location>
        <begin position="1"/>
        <end position="24"/>
    </location>
</feature>
<feature type="compositionally biased region" description="Pro residues" evidence="2">
    <location>
        <begin position="7"/>
        <end position="18"/>
    </location>
</feature>
<accession>Q84176</accession>
<accession>Q9YTR9</accession>
<name>CAPSP_ADEP3</name>
<gene>
    <name evidence="1" type="primary">L2</name>
</gene>
<evidence type="ECO:0000255" key="1">
    <source>
        <dbReference type="HAMAP-Rule" id="MF_04052"/>
    </source>
</evidence>
<evidence type="ECO:0000256" key="2">
    <source>
        <dbReference type="SAM" id="MobiDB-lite"/>
    </source>
</evidence>
<proteinExistence type="inferred from homology"/>
<protein>
    <recommendedName>
        <fullName evidence="1">Penton protein</fullName>
        <shortName evidence="1">CP-P</shortName>
    </recommendedName>
    <alternativeName>
        <fullName evidence="1">Penton base protein</fullName>
    </alternativeName>
    <alternativeName>
        <fullName evidence="1">Protein III</fullName>
    </alternativeName>
</protein>
<sequence>MRRMMPAAPPQGASPPPSYESVVGSSLTEPLYVPPRYLGPTEGRNSIRYSQLPPLYDTTKIYLIDNKSADIASLNYQNNHSDFLTSVVQNSDFTPMEASTQTINLDERSRWGGEFKSILTTNIPNVTQYMFSNSFRVRLMSARDKETNAPTYEWFTLTLPEGNFSDIAVIDLMNNAIVENYLAVGRQQGVKEEDIGVKIDTRNFRLGYDPETKLVMPGSYTNMAFHPDVVLAPGCAIDFTFSRLNNLLGIRKRYPYQEGFMLTYEDLAGGNIPALLDLTTYDQENSSTIKPLKQDSKGRSYHVGEDPEAGDTFTYYRSWYLAYNYGDPATGTASQTLLVSPDVTCGVEQVYWSLPDLMQDPVTFRPSQTPSNYPVVATELLPLRSRAFYNTQAVYSQLLQQATNNTLVFNRFPENQILLRPPESTITSISENVPSLTDHGTLPLRNSIPGVQRVTVTDARRRVCPYVYKSLGVVTPRVLSSRTF</sequence>
<dbReference type="EMBL" id="U24432">
    <property type="protein sequence ID" value="AAB38490.1"/>
    <property type="molecule type" value="Genomic_DNA"/>
</dbReference>
<dbReference type="EMBL" id="AF083132">
    <property type="protein sequence ID" value="AAC99444.1"/>
    <property type="molecule type" value="Genomic_DNA"/>
</dbReference>
<dbReference type="EMBL" id="AJ237815">
    <property type="protein sequence ID" value="CAB41028.1"/>
    <property type="molecule type" value="Genomic_DNA"/>
</dbReference>
<dbReference type="EMBL" id="AB026117">
    <property type="protein sequence ID" value="BAA76966.1"/>
    <property type="molecule type" value="Genomic_DNA"/>
</dbReference>
<dbReference type="RefSeq" id="YP_009205.1">
    <property type="nucleotide sequence ID" value="AC_000189.1"/>
</dbReference>
<dbReference type="SMR" id="Q84176"/>
<dbReference type="OrthoDB" id="1939at10239"/>
<dbReference type="Proteomes" id="UP000101284">
    <property type="component" value="Genome"/>
</dbReference>
<dbReference type="Proteomes" id="UP000130591">
    <property type="component" value="Genome"/>
</dbReference>
<dbReference type="Proteomes" id="UP000148028">
    <property type="component" value="Genome"/>
</dbReference>
<dbReference type="GO" id="GO:0042025">
    <property type="term" value="C:host cell nucleus"/>
    <property type="evidence" value="ECO:0007669"/>
    <property type="project" value="UniProtKB-SubCell"/>
</dbReference>
<dbReference type="GO" id="GO:0039623">
    <property type="term" value="C:T=25 icosahedral viral capsid"/>
    <property type="evidence" value="ECO:0007669"/>
    <property type="project" value="UniProtKB-UniRule"/>
</dbReference>
<dbReference type="GO" id="GO:0005198">
    <property type="term" value="F:structural molecule activity"/>
    <property type="evidence" value="ECO:0007669"/>
    <property type="project" value="UniProtKB-UniRule"/>
</dbReference>
<dbReference type="GO" id="GO:0075509">
    <property type="term" value="P:endocytosis involved in viral entry into host cell"/>
    <property type="evidence" value="ECO:0007669"/>
    <property type="project" value="UniProtKB-KW"/>
</dbReference>
<dbReference type="GO" id="GO:0019062">
    <property type="term" value="P:virion attachment to host cell"/>
    <property type="evidence" value="ECO:0007669"/>
    <property type="project" value="UniProtKB-UniRule"/>
</dbReference>
<dbReference type="Gene3D" id="3.90.1620.10">
    <property type="entry name" value="adenovirus 2 penton base, domain 2"/>
    <property type="match status" value="1"/>
</dbReference>
<dbReference type="Gene3D" id="2.60.120.550">
    <property type="entry name" value="Penton protein, domain 1"/>
    <property type="match status" value="1"/>
</dbReference>
<dbReference type="HAMAP" id="MF_04052">
    <property type="entry name" value="ADV_CAPSP"/>
    <property type="match status" value="1"/>
</dbReference>
<dbReference type="InterPro" id="IPR002605">
    <property type="entry name" value="Adeno_Penton_B"/>
</dbReference>
<dbReference type="Pfam" id="PF01686">
    <property type="entry name" value="Adeno_Penton_B"/>
    <property type="match status" value="1"/>
</dbReference>
<organismHost>
    <name type="scientific">Sus scrofa</name>
    <name type="common">Pig</name>
    <dbReference type="NCBI Taxonomy" id="9823"/>
</organismHost>
<keyword id="KW-0167">Capsid protein</keyword>
<keyword id="KW-1048">Host nucleus</keyword>
<keyword id="KW-0945">Host-virus interaction</keyword>
<keyword id="KW-0426">Late protein</keyword>
<keyword id="KW-1185">Reference proteome</keyword>
<keyword id="KW-1148">T=25 icosahedral capsid protein</keyword>
<keyword id="KW-1161">Viral attachment to host cell</keyword>
<keyword id="KW-1162">Viral penetration into host cytoplasm</keyword>
<keyword id="KW-0946">Virion</keyword>
<keyword id="KW-1164">Virus endocytosis by host</keyword>
<keyword id="KW-1160">Virus entry into host cell</keyword>
<reference key="1">
    <citation type="submission" date="1995-04" db="EMBL/GenBank/DDBJ databases">
        <authorList>
            <person name="McCoy R.J."/>
            <person name="Johnson M.A."/>
            <person name="Sheppard M."/>
        </authorList>
    </citation>
    <scope>NUCLEOTIDE SEQUENCE [GENOMIC DNA]</scope>
</reference>
<reference key="2">
    <citation type="journal article" date="1998" name="Virology">
        <title>Nucleotide sequence and transcription map of porcine adenovirus type 3.</title>
        <authorList>
            <person name="Reddy P.S."/>
            <person name="Idamakanti N."/>
            <person name="Song J.Y."/>
            <person name="Lee J.B."/>
            <person name="Hyun B.H."/>
            <person name="Park J.H."/>
            <person name="Cha S.H."/>
            <person name="Bae Y.T."/>
            <person name="Tikoo S.K."/>
            <person name="Babiuk L.A."/>
        </authorList>
    </citation>
    <scope>NUCLEOTIDE SEQUENCE [GENOMIC DNA]</scope>
    <source>
        <strain>6618</strain>
    </source>
</reference>
<reference key="3">
    <citation type="submission" date="1999-02" db="EMBL/GenBank/DDBJ databases">
        <title>Porcine adenovirus serotype 3, complete genome.</title>
        <authorList>
            <person name="Larocque D."/>
            <person name="Malenfant F."/>
            <person name="Massie B."/>
            <person name="Dea S."/>
        </authorList>
    </citation>
    <scope>NUCLEOTIDE SEQUENCE [LARGE SCALE GENOMIC DNA]</scope>
    <source>
        <strain>6618 / IAF</strain>
    </source>
</reference>
<organism>
    <name type="scientific">Porcine adenovirus A serotype 3</name>
    <name type="common">PAdV-3</name>
    <name type="synonym">Porcine adenovirus 3</name>
    <dbReference type="NCBI Taxonomy" id="35265"/>
    <lineage>
        <taxon>Viruses</taxon>
        <taxon>Varidnaviria</taxon>
        <taxon>Bamfordvirae</taxon>
        <taxon>Preplasmiviricota</taxon>
        <taxon>Tectiliviricetes</taxon>
        <taxon>Rowavirales</taxon>
        <taxon>Adenoviridae</taxon>
        <taxon>Mastadenovirus</taxon>
        <taxon>Mastadenovirus porcustertium</taxon>
    </lineage>
</organism>
<comment type="function">
    <text evidence="1">Major capsid protein that self-associates to form penton base pentamers, each in the shape of a pentagon, situated at the 12 vertices of the pseudo T=25 capsid. Involved in virus secondary attachment to host cell after initial attachment by the fiber protein, and in endocytosis of virions. As the virus enters the host cell, penton proteins are shed concomitant with virion acidification in the endosome.</text>
</comment>
<comment type="subunit">
    <text evidence="1">Interacts with the fiber protein (via N-terminal tail region). Interacts with the capsid vertex protein; this interaction binds the penton base to neighboring peripentonal hexons.</text>
</comment>
<comment type="subcellular location">
    <subcellularLocation>
        <location evidence="1">Virion</location>
    </subcellularLocation>
    <subcellularLocation>
        <location evidence="1">Host nucleus</location>
    </subcellularLocation>
    <text evidence="1">Located at each vertex of the virion.</text>
</comment>
<comment type="induction">
    <text evidence="1">Expressed in the late phase of the viral replicative cycle.</text>
</comment>
<comment type="miscellaneous">
    <text evidence="1">All late proteins expressed from the major late promoter are produced by alternative splicing and alternative polyadenylation of the same gene giving rise to non-overlapping ORFs. A leader sequence is present in the N-terminus of all these mRNAs and is recognized by the viral shutoff protein to provide expression although conventional translation via ribosome scanning from the cap has been shut off in the host cell.</text>
</comment>
<comment type="similarity">
    <text evidence="1">Belongs to the adenoviridae penton family.</text>
</comment>